<keyword id="KW-0687">Ribonucleoprotein</keyword>
<keyword id="KW-0689">Ribosomal protein</keyword>
<keyword id="KW-0694">RNA-binding</keyword>
<keyword id="KW-0699">rRNA-binding</keyword>
<gene>
    <name evidence="1" type="primary">rplJ</name>
    <name type="ordered locus">swp_2000</name>
</gene>
<dbReference type="EMBL" id="CP000472">
    <property type="protein sequence ID" value="ACJ28757.1"/>
    <property type="molecule type" value="Genomic_DNA"/>
</dbReference>
<dbReference type="RefSeq" id="WP_020912130.1">
    <property type="nucleotide sequence ID" value="NC_011566.1"/>
</dbReference>
<dbReference type="STRING" id="225849.swp_2000"/>
<dbReference type="KEGG" id="swp:swp_2000"/>
<dbReference type="eggNOG" id="COG0244">
    <property type="taxonomic scope" value="Bacteria"/>
</dbReference>
<dbReference type="HOGENOM" id="CLU_092227_0_2_6"/>
<dbReference type="OrthoDB" id="9808307at2"/>
<dbReference type="Proteomes" id="UP000000753">
    <property type="component" value="Chromosome"/>
</dbReference>
<dbReference type="GO" id="GO:0015934">
    <property type="term" value="C:large ribosomal subunit"/>
    <property type="evidence" value="ECO:0007669"/>
    <property type="project" value="InterPro"/>
</dbReference>
<dbReference type="GO" id="GO:0070180">
    <property type="term" value="F:large ribosomal subunit rRNA binding"/>
    <property type="evidence" value="ECO:0007669"/>
    <property type="project" value="UniProtKB-UniRule"/>
</dbReference>
<dbReference type="GO" id="GO:0003735">
    <property type="term" value="F:structural constituent of ribosome"/>
    <property type="evidence" value="ECO:0007669"/>
    <property type="project" value="InterPro"/>
</dbReference>
<dbReference type="GO" id="GO:0006412">
    <property type="term" value="P:translation"/>
    <property type="evidence" value="ECO:0007669"/>
    <property type="project" value="UniProtKB-UniRule"/>
</dbReference>
<dbReference type="CDD" id="cd05797">
    <property type="entry name" value="Ribosomal_L10"/>
    <property type="match status" value="1"/>
</dbReference>
<dbReference type="FunFam" id="3.30.70.1730:FF:000001">
    <property type="entry name" value="50S ribosomal protein L10"/>
    <property type="match status" value="1"/>
</dbReference>
<dbReference type="Gene3D" id="3.30.70.1730">
    <property type="match status" value="1"/>
</dbReference>
<dbReference type="Gene3D" id="6.10.250.2350">
    <property type="match status" value="1"/>
</dbReference>
<dbReference type="HAMAP" id="MF_00362">
    <property type="entry name" value="Ribosomal_uL10"/>
    <property type="match status" value="1"/>
</dbReference>
<dbReference type="InterPro" id="IPR001790">
    <property type="entry name" value="Ribosomal_uL10"/>
</dbReference>
<dbReference type="InterPro" id="IPR043141">
    <property type="entry name" value="Ribosomal_uL10-like_sf"/>
</dbReference>
<dbReference type="InterPro" id="IPR022973">
    <property type="entry name" value="Ribosomal_uL10_bac"/>
</dbReference>
<dbReference type="InterPro" id="IPR047865">
    <property type="entry name" value="Ribosomal_uL10_bac_type"/>
</dbReference>
<dbReference type="InterPro" id="IPR002363">
    <property type="entry name" value="Ribosomal_uL10_CS_bac"/>
</dbReference>
<dbReference type="NCBIfam" id="NF000955">
    <property type="entry name" value="PRK00099.1-1"/>
    <property type="match status" value="1"/>
</dbReference>
<dbReference type="PANTHER" id="PTHR11560">
    <property type="entry name" value="39S RIBOSOMAL PROTEIN L10, MITOCHONDRIAL"/>
    <property type="match status" value="1"/>
</dbReference>
<dbReference type="Pfam" id="PF00466">
    <property type="entry name" value="Ribosomal_L10"/>
    <property type="match status" value="1"/>
</dbReference>
<dbReference type="SUPFAM" id="SSF160369">
    <property type="entry name" value="Ribosomal protein L10-like"/>
    <property type="match status" value="1"/>
</dbReference>
<dbReference type="PROSITE" id="PS01109">
    <property type="entry name" value="RIBOSOMAL_L10"/>
    <property type="match status" value="1"/>
</dbReference>
<name>RL10_SHEPW</name>
<proteinExistence type="inferred from homology"/>
<organism>
    <name type="scientific">Shewanella piezotolerans (strain WP3 / JCM 13877)</name>
    <dbReference type="NCBI Taxonomy" id="225849"/>
    <lineage>
        <taxon>Bacteria</taxon>
        <taxon>Pseudomonadati</taxon>
        <taxon>Pseudomonadota</taxon>
        <taxon>Gammaproteobacteria</taxon>
        <taxon>Alteromonadales</taxon>
        <taxon>Shewanellaceae</taxon>
        <taxon>Shewanella</taxon>
    </lineage>
</organism>
<sequence>MALGLEDKKAIVAEVNEAAKGALSAVVADSRGVTVGDMTGLRKAAREAGVYVKVVRNTLVKRAVAGTDFECLADTFTGPTLIAFSNEHPGAAARLLKDFAKEQEKFEIKAAAFEGELIPADNIDRLAKLPTYEEALAQFMMTLKEASAGKLVRTLAALRDQKEAA</sequence>
<accession>B8CNC3</accession>
<feature type="chain" id="PRO_1000121014" description="Large ribosomal subunit protein uL10">
    <location>
        <begin position="1"/>
        <end position="165"/>
    </location>
</feature>
<evidence type="ECO:0000255" key="1">
    <source>
        <dbReference type="HAMAP-Rule" id="MF_00362"/>
    </source>
</evidence>
<evidence type="ECO:0000305" key="2"/>
<comment type="function">
    <text evidence="1">Forms part of the ribosomal stalk, playing a central role in the interaction of the ribosome with GTP-bound translation factors.</text>
</comment>
<comment type="subunit">
    <text evidence="1">Part of the ribosomal stalk of the 50S ribosomal subunit. The N-terminus interacts with L11 and the large rRNA to form the base of the stalk. The C-terminus forms an elongated spine to which L12 dimers bind in a sequential fashion forming a multimeric L10(L12)X complex.</text>
</comment>
<comment type="similarity">
    <text evidence="1">Belongs to the universal ribosomal protein uL10 family.</text>
</comment>
<protein>
    <recommendedName>
        <fullName evidence="1">Large ribosomal subunit protein uL10</fullName>
    </recommendedName>
    <alternativeName>
        <fullName evidence="2">50S ribosomal protein L10</fullName>
    </alternativeName>
</protein>
<reference key="1">
    <citation type="journal article" date="2008" name="PLoS ONE">
        <title>Environmental adaptation: genomic analysis of the piezotolerant and psychrotolerant deep-sea iron reducing bacterium Shewanella piezotolerans WP3.</title>
        <authorList>
            <person name="Wang F."/>
            <person name="Wang J."/>
            <person name="Jian H."/>
            <person name="Zhang B."/>
            <person name="Li S."/>
            <person name="Wang F."/>
            <person name="Zeng X."/>
            <person name="Gao L."/>
            <person name="Bartlett D.H."/>
            <person name="Yu J."/>
            <person name="Hu S."/>
            <person name="Xiao X."/>
        </authorList>
    </citation>
    <scope>NUCLEOTIDE SEQUENCE [LARGE SCALE GENOMIC DNA]</scope>
    <source>
        <strain>WP3 / JCM 13877</strain>
    </source>
</reference>